<reference key="1">
    <citation type="journal article" date="2000" name="Nature">
        <title>DNA sequence of both chromosomes of the cholera pathogen Vibrio cholerae.</title>
        <authorList>
            <person name="Heidelberg J.F."/>
            <person name="Eisen J.A."/>
            <person name="Nelson W.C."/>
            <person name="Clayton R.A."/>
            <person name="Gwinn M.L."/>
            <person name="Dodson R.J."/>
            <person name="Haft D.H."/>
            <person name="Hickey E.K."/>
            <person name="Peterson J.D."/>
            <person name="Umayam L.A."/>
            <person name="Gill S.R."/>
            <person name="Nelson K.E."/>
            <person name="Read T.D."/>
            <person name="Tettelin H."/>
            <person name="Richardson D.L."/>
            <person name="Ermolaeva M.D."/>
            <person name="Vamathevan J.J."/>
            <person name="Bass S."/>
            <person name="Qin H."/>
            <person name="Dragoi I."/>
            <person name="Sellers P."/>
            <person name="McDonald L.A."/>
            <person name="Utterback T.R."/>
            <person name="Fleischmann R.D."/>
            <person name="Nierman W.C."/>
            <person name="White O."/>
            <person name="Salzberg S.L."/>
            <person name="Smith H.O."/>
            <person name="Colwell R.R."/>
            <person name="Mekalanos J.J."/>
            <person name="Venter J.C."/>
            <person name="Fraser C.M."/>
        </authorList>
    </citation>
    <scope>NUCLEOTIDE SEQUENCE [LARGE SCALE GENOMIC DNA]</scope>
    <source>
        <strain>ATCC 39315 / El Tor Inaba N16961</strain>
    </source>
</reference>
<dbReference type="EMBL" id="AE003852">
    <property type="protein sequence ID" value="AAF95820.1"/>
    <property type="molecule type" value="Genomic_DNA"/>
</dbReference>
<dbReference type="PIR" id="B82047">
    <property type="entry name" value="B82047"/>
</dbReference>
<dbReference type="RefSeq" id="NP_232307.1">
    <property type="nucleotide sequence ID" value="NC_002505.1"/>
</dbReference>
<dbReference type="RefSeq" id="WP_000643446.1">
    <property type="nucleotide sequence ID" value="NZ_LT906614.1"/>
</dbReference>
<dbReference type="SMR" id="Q9KNQ2"/>
<dbReference type="STRING" id="243277.VC_2679"/>
<dbReference type="DNASU" id="2615507"/>
<dbReference type="EnsemblBacteria" id="AAF95820">
    <property type="protein sequence ID" value="AAF95820"/>
    <property type="gene ID" value="VC_2679"/>
</dbReference>
<dbReference type="GeneID" id="89513343"/>
<dbReference type="KEGG" id="vch:VC_2679"/>
<dbReference type="PATRIC" id="fig|243277.26.peg.2554"/>
<dbReference type="eggNOG" id="COG0254">
    <property type="taxonomic scope" value="Bacteria"/>
</dbReference>
<dbReference type="HOGENOM" id="CLU_114306_4_3_6"/>
<dbReference type="Proteomes" id="UP000000584">
    <property type="component" value="Chromosome 1"/>
</dbReference>
<dbReference type="GO" id="GO:1990904">
    <property type="term" value="C:ribonucleoprotein complex"/>
    <property type="evidence" value="ECO:0007669"/>
    <property type="project" value="UniProtKB-KW"/>
</dbReference>
<dbReference type="GO" id="GO:0005840">
    <property type="term" value="C:ribosome"/>
    <property type="evidence" value="ECO:0007669"/>
    <property type="project" value="UniProtKB-KW"/>
</dbReference>
<dbReference type="GO" id="GO:0046872">
    <property type="term" value="F:metal ion binding"/>
    <property type="evidence" value="ECO:0007669"/>
    <property type="project" value="UniProtKB-KW"/>
</dbReference>
<dbReference type="GO" id="GO:0019843">
    <property type="term" value="F:rRNA binding"/>
    <property type="evidence" value="ECO:0007669"/>
    <property type="project" value="UniProtKB-KW"/>
</dbReference>
<dbReference type="GO" id="GO:0003735">
    <property type="term" value="F:structural constituent of ribosome"/>
    <property type="evidence" value="ECO:0007669"/>
    <property type="project" value="InterPro"/>
</dbReference>
<dbReference type="GO" id="GO:0006412">
    <property type="term" value="P:translation"/>
    <property type="evidence" value="ECO:0007669"/>
    <property type="project" value="UniProtKB-UniRule"/>
</dbReference>
<dbReference type="Gene3D" id="4.10.830.30">
    <property type="entry name" value="Ribosomal protein L31"/>
    <property type="match status" value="1"/>
</dbReference>
<dbReference type="HAMAP" id="MF_00501">
    <property type="entry name" value="Ribosomal_bL31_1"/>
    <property type="match status" value="1"/>
</dbReference>
<dbReference type="InterPro" id="IPR034704">
    <property type="entry name" value="Ribosomal_bL28/bL31-like_sf"/>
</dbReference>
<dbReference type="InterPro" id="IPR002150">
    <property type="entry name" value="Ribosomal_bL31"/>
</dbReference>
<dbReference type="InterPro" id="IPR027491">
    <property type="entry name" value="Ribosomal_bL31_A"/>
</dbReference>
<dbReference type="InterPro" id="IPR042105">
    <property type="entry name" value="Ribosomal_bL31_sf"/>
</dbReference>
<dbReference type="NCBIfam" id="TIGR00105">
    <property type="entry name" value="L31"/>
    <property type="match status" value="1"/>
</dbReference>
<dbReference type="NCBIfam" id="NF000612">
    <property type="entry name" value="PRK00019.1"/>
    <property type="match status" value="1"/>
</dbReference>
<dbReference type="NCBIfam" id="NF001809">
    <property type="entry name" value="PRK00528.1"/>
    <property type="match status" value="1"/>
</dbReference>
<dbReference type="PANTHER" id="PTHR33280">
    <property type="entry name" value="50S RIBOSOMAL PROTEIN L31, CHLOROPLASTIC"/>
    <property type="match status" value="1"/>
</dbReference>
<dbReference type="PANTHER" id="PTHR33280:SF6">
    <property type="entry name" value="LARGE RIBOSOMAL SUBUNIT PROTEIN BL31A"/>
    <property type="match status" value="1"/>
</dbReference>
<dbReference type="Pfam" id="PF01197">
    <property type="entry name" value="Ribosomal_L31"/>
    <property type="match status" value="1"/>
</dbReference>
<dbReference type="PRINTS" id="PR01249">
    <property type="entry name" value="RIBOSOMALL31"/>
</dbReference>
<dbReference type="SUPFAM" id="SSF143800">
    <property type="entry name" value="L28p-like"/>
    <property type="match status" value="1"/>
</dbReference>
<dbReference type="PROSITE" id="PS01143">
    <property type="entry name" value="RIBOSOMAL_L31"/>
    <property type="match status" value="1"/>
</dbReference>
<accession>Q9KNQ2</accession>
<organism>
    <name type="scientific">Vibrio cholerae serotype O1 (strain ATCC 39315 / El Tor Inaba N16961)</name>
    <dbReference type="NCBI Taxonomy" id="243277"/>
    <lineage>
        <taxon>Bacteria</taxon>
        <taxon>Pseudomonadati</taxon>
        <taxon>Pseudomonadota</taxon>
        <taxon>Gammaproteobacteria</taxon>
        <taxon>Vibrionales</taxon>
        <taxon>Vibrionaceae</taxon>
        <taxon>Vibrio</taxon>
    </lineage>
</organism>
<sequence>MKAGIHPEYKAVNATCSCGNSFVFNSTLGKDTMHLDVCDKCHPFYSGKQRIVDTGGRVERFNKRFGALSAKK</sequence>
<keyword id="KW-0479">Metal-binding</keyword>
<keyword id="KW-1185">Reference proteome</keyword>
<keyword id="KW-0687">Ribonucleoprotein</keyword>
<keyword id="KW-0689">Ribosomal protein</keyword>
<keyword id="KW-0694">RNA-binding</keyword>
<keyword id="KW-0699">rRNA-binding</keyword>
<keyword id="KW-0862">Zinc</keyword>
<gene>
    <name evidence="1" type="primary">rpmE</name>
    <name type="ordered locus">VC_2679</name>
</gene>
<name>RL31_VIBCH</name>
<feature type="chain" id="PRO_0000173176" description="Large ribosomal subunit protein bL31">
    <location>
        <begin position="1"/>
        <end position="72"/>
    </location>
</feature>
<feature type="binding site" evidence="1">
    <location>
        <position position="16"/>
    </location>
    <ligand>
        <name>Zn(2+)</name>
        <dbReference type="ChEBI" id="CHEBI:29105"/>
    </ligand>
</feature>
<feature type="binding site" evidence="1">
    <location>
        <position position="18"/>
    </location>
    <ligand>
        <name>Zn(2+)</name>
        <dbReference type="ChEBI" id="CHEBI:29105"/>
    </ligand>
</feature>
<feature type="binding site" evidence="1">
    <location>
        <position position="38"/>
    </location>
    <ligand>
        <name>Zn(2+)</name>
        <dbReference type="ChEBI" id="CHEBI:29105"/>
    </ligand>
</feature>
<feature type="binding site" evidence="1">
    <location>
        <position position="41"/>
    </location>
    <ligand>
        <name>Zn(2+)</name>
        <dbReference type="ChEBI" id="CHEBI:29105"/>
    </ligand>
</feature>
<comment type="function">
    <text evidence="1">Binds the 23S rRNA.</text>
</comment>
<comment type="cofactor">
    <cofactor evidence="1">
        <name>Zn(2+)</name>
        <dbReference type="ChEBI" id="CHEBI:29105"/>
    </cofactor>
    <text evidence="1">Binds 1 zinc ion per subunit.</text>
</comment>
<comment type="subunit">
    <text evidence="1">Part of the 50S ribosomal subunit.</text>
</comment>
<comment type="similarity">
    <text evidence="1">Belongs to the bacterial ribosomal protein bL31 family. Type A subfamily.</text>
</comment>
<proteinExistence type="inferred from homology"/>
<evidence type="ECO:0000255" key="1">
    <source>
        <dbReference type="HAMAP-Rule" id="MF_00501"/>
    </source>
</evidence>
<evidence type="ECO:0000305" key="2"/>
<protein>
    <recommendedName>
        <fullName evidence="1">Large ribosomal subunit protein bL31</fullName>
    </recommendedName>
    <alternativeName>
        <fullName evidence="2">50S ribosomal protein L31</fullName>
    </alternativeName>
</protein>